<proteinExistence type="inferred from homology"/>
<dbReference type="EC" id="4.3.2.10" evidence="1"/>
<dbReference type="EC" id="3.5.1.2" evidence="1"/>
<dbReference type="EMBL" id="BA000035">
    <property type="protein sequence ID" value="BAC18807.1"/>
    <property type="molecule type" value="Genomic_DNA"/>
</dbReference>
<dbReference type="RefSeq" id="WP_006767995.1">
    <property type="nucleotide sequence ID" value="NC_004369.1"/>
</dbReference>
<dbReference type="SMR" id="Q8FNZ6"/>
<dbReference type="STRING" id="196164.gene:10742425"/>
<dbReference type="KEGG" id="cef:CE1997"/>
<dbReference type="eggNOG" id="COG0118">
    <property type="taxonomic scope" value="Bacteria"/>
</dbReference>
<dbReference type="HOGENOM" id="CLU_071837_1_0_11"/>
<dbReference type="OrthoDB" id="9807137at2"/>
<dbReference type="UniPathway" id="UPA00031">
    <property type="reaction ID" value="UER00010"/>
</dbReference>
<dbReference type="Proteomes" id="UP000001409">
    <property type="component" value="Chromosome"/>
</dbReference>
<dbReference type="GO" id="GO:0005737">
    <property type="term" value="C:cytoplasm"/>
    <property type="evidence" value="ECO:0007669"/>
    <property type="project" value="UniProtKB-SubCell"/>
</dbReference>
<dbReference type="GO" id="GO:0004359">
    <property type="term" value="F:glutaminase activity"/>
    <property type="evidence" value="ECO:0007669"/>
    <property type="project" value="UniProtKB-EC"/>
</dbReference>
<dbReference type="GO" id="GO:0000107">
    <property type="term" value="F:imidazoleglycerol-phosphate synthase activity"/>
    <property type="evidence" value="ECO:0007669"/>
    <property type="project" value="UniProtKB-UniRule"/>
</dbReference>
<dbReference type="GO" id="GO:0016829">
    <property type="term" value="F:lyase activity"/>
    <property type="evidence" value="ECO:0007669"/>
    <property type="project" value="UniProtKB-KW"/>
</dbReference>
<dbReference type="GO" id="GO:0000105">
    <property type="term" value="P:L-histidine biosynthetic process"/>
    <property type="evidence" value="ECO:0007669"/>
    <property type="project" value="UniProtKB-UniRule"/>
</dbReference>
<dbReference type="CDD" id="cd01748">
    <property type="entry name" value="GATase1_IGP_Synthase"/>
    <property type="match status" value="1"/>
</dbReference>
<dbReference type="FunFam" id="3.40.50.880:FF:000056">
    <property type="entry name" value="Imidazole glycerol phosphate synthase subunit HisH"/>
    <property type="match status" value="1"/>
</dbReference>
<dbReference type="Gene3D" id="3.40.50.880">
    <property type="match status" value="1"/>
</dbReference>
<dbReference type="HAMAP" id="MF_00278">
    <property type="entry name" value="HisH"/>
    <property type="match status" value="1"/>
</dbReference>
<dbReference type="InterPro" id="IPR029062">
    <property type="entry name" value="Class_I_gatase-like"/>
</dbReference>
<dbReference type="InterPro" id="IPR017926">
    <property type="entry name" value="GATASE"/>
</dbReference>
<dbReference type="InterPro" id="IPR010139">
    <property type="entry name" value="Imidazole-glycPsynth_HisH"/>
</dbReference>
<dbReference type="NCBIfam" id="TIGR01855">
    <property type="entry name" value="IMP_synth_hisH"/>
    <property type="match status" value="1"/>
</dbReference>
<dbReference type="PANTHER" id="PTHR42701">
    <property type="entry name" value="IMIDAZOLE GLYCEROL PHOSPHATE SYNTHASE SUBUNIT HISH"/>
    <property type="match status" value="1"/>
</dbReference>
<dbReference type="PANTHER" id="PTHR42701:SF1">
    <property type="entry name" value="IMIDAZOLE GLYCEROL PHOSPHATE SYNTHASE SUBUNIT HISH"/>
    <property type="match status" value="1"/>
</dbReference>
<dbReference type="Pfam" id="PF00117">
    <property type="entry name" value="GATase"/>
    <property type="match status" value="1"/>
</dbReference>
<dbReference type="PIRSF" id="PIRSF000495">
    <property type="entry name" value="Amidotransf_hisH"/>
    <property type="match status" value="1"/>
</dbReference>
<dbReference type="SUPFAM" id="SSF52317">
    <property type="entry name" value="Class I glutamine amidotransferase-like"/>
    <property type="match status" value="1"/>
</dbReference>
<dbReference type="PROSITE" id="PS51273">
    <property type="entry name" value="GATASE_TYPE_1"/>
    <property type="match status" value="1"/>
</dbReference>
<gene>
    <name evidence="1" type="primary">hisH</name>
    <name type="ordered locus">CE1997</name>
</gene>
<evidence type="ECO:0000255" key="1">
    <source>
        <dbReference type="HAMAP-Rule" id="MF_00278"/>
    </source>
</evidence>
<keyword id="KW-0028">Amino-acid biosynthesis</keyword>
<keyword id="KW-0963">Cytoplasm</keyword>
<keyword id="KW-0315">Glutamine amidotransferase</keyword>
<keyword id="KW-0368">Histidine biosynthesis</keyword>
<keyword id="KW-0378">Hydrolase</keyword>
<keyword id="KW-0456">Lyase</keyword>
<keyword id="KW-1185">Reference proteome</keyword>
<comment type="function">
    <text evidence="1">IGPS catalyzes the conversion of PRFAR and glutamine to IGP, AICAR and glutamate. The HisH subunit catalyzes the hydrolysis of glutamine to glutamate and ammonia as part of the synthesis of IGP and AICAR. The resulting ammonia molecule is channeled to the active site of HisF.</text>
</comment>
<comment type="catalytic activity">
    <reaction evidence="1">
        <text>5-[(5-phospho-1-deoxy-D-ribulos-1-ylimino)methylamino]-1-(5-phospho-beta-D-ribosyl)imidazole-4-carboxamide + L-glutamine = D-erythro-1-(imidazol-4-yl)glycerol 3-phosphate + 5-amino-1-(5-phospho-beta-D-ribosyl)imidazole-4-carboxamide + L-glutamate + H(+)</text>
        <dbReference type="Rhea" id="RHEA:24793"/>
        <dbReference type="ChEBI" id="CHEBI:15378"/>
        <dbReference type="ChEBI" id="CHEBI:29985"/>
        <dbReference type="ChEBI" id="CHEBI:58278"/>
        <dbReference type="ChEBI" id="CHEBI:58359"/>
        <dbReference type="ChEBI" id="CHEBI:58475"/>
        <dbReference type="ChEBI" id="CHEBI:58525"/>
        <dbReference type="EC" id="4.3.2.10"/>
    </reaction>
</comment>
<comment type="catalytic activity">
    <reaction evidence="1">
        <text>L-glutamine + H2O = L-glutamate + NH4(+)</text>
        <dbReference type="Rhea" id="RHEA:15889"/>
        <dbReference type="ChEBI" id="CHEBI:15377"/>
        <dbReference type="ChEBI" id="CHEBI:28938"/>
        <dbReference type="ChEBI" id="CHEBI:29985"/>
        <dbReference type="ChEBI" id="CHEBI:58359"/>
        <dbReference type="EC" id="3.5.1.2"/>
    </reaction>
</comment>
<comment type="pathway">
    <text evidence="1">Amino-acid biosynthesis; L-histidine biosynthesis; L-histidine from 5-phospho-alpha-D-ribose 1-diphosphate: step 5/9.</text>
</comment>
<comment type="subunit">
    <text evidence="1">Heterodimer of HisH and HisF.</text>
</comment>
<comment type="subcellular location">
    <subcellularLocation>
        <location evidence="1">Cytoplasm</location>
    </subcellularLocation>
</comment>
<sequence>MTKTVALLDYGSGNLRSAQRALEHVGAEVIVTSDPDICTNADGLLVPGVGAFDACMKGLRGVFGHRIIGTRLAGGRPVMGICVGMQILFDEGIEHGIQTRGCGEWSGRVERLQARILPHMGWNTVEKQPGSEMFAGLSEDERYYFVHTYGVRDWTLVTDDLTTPPLVTWAVHENDRFVAAVENGALWATQFHPEKSGDAGAQLLRNWINHI</sequence>
<feature type="chain" id="PRO_0000152369" description="Imidazole glycerol phosphate synthase subunit HisH">
    <location>
        <begin position="1"/>
        <end position="211"/>
    </location>
</feature>
<feature type="domain" description="Glutamine amidotransferase type-1" evidence="1">
    <location>
        <begin position="4"/>
        <end position="211"/>
    </location>
</feature>
<feature type="active site" description="Nucleophile" evidence="1">
    <location>
        <position position="82"/>
    </location>
</feature>
<feature type="active site" evidence="1">
    <location>
        <position position="192"/>
    </location>
</feature>
<feature type="active site" evidence="1">
    <location>
        <position position="194"/>
    </location>
</feature>
<protein>
    <recommendedName>
        <fullName evidence="1">Imidazole glycerol phosphate synthase subunit HisH</fullName>
        <ecNumber evidence="1">4.3.2.10</ecNumber>
    </recommendedName>
    <alternativeName>
        <fullName evidence="1">IGP synthase glutaminase subunit</fullName>
        <ecNumber evidence="1">3.5.1.2</ecNumber>
    </alternativeName>
    <alternativeName>
        <fullName evidence="1">IGP synthase subunit HisH</fullName>
    </alternativeName>
    <alternativeName>
        <fullName evidence="1">ImGP synthase subunit HisH</fullName>
        <shortName evidence="1">IGPS subunit HisH</shortName>
    </alternativeName>
</protein>
<name>HIS5_COREF</name>
<accession>Q8FNZ6</accession>
<organism>
    <name type="scientific">Corynebacterium efficiens (strain DSM 44549 / YS-314 / AJ 12310 / JCM 11189 / NBRC 100395)</name>
    <dbReference type="NCBI Taxonomy" id="196164"/>
    <lineage>
        <taxon>Bacteria</taxon>
        <taxon>Bacillati</taxon>
        <taxon>Actinomycetota</taxon>
        <taxon>Actinomycetes</taxon>
        <taxon>Mycobacteriales</taxon>
        <taxon>Corynebacteriaceae</taxon>
        <taxon>Corynebacterium</taxon>
    </lineage>
</organism>
<reference key="1">
    <citation type="journal article" date="2003" name="Genome Res.">
        <title>Comparative complete genome sequence analysis of the amino acid replacements responsible for the thermostability of Corynebacterium efficiens.</title>
        <authorList>
            <person name="Nishio Y."/>
            <person name="Nakamura Y."/>
            <person name="Kawarabayasi Y."/>
            <person name="Usuda Y."/>
            <person name="Kimura E."/>
            <person name="Sugimoto S."/>
            <person name="Matsui K."/>
            <person name="Yamagishi A."/>
            <person name="Kikuchi H."/>
            <person name="Ikeo K."/>
            <person name="Gojobori T."/>
        </authorList>
    </citation>
    <scope>NUCLEOTIDE SEQUENCE [LARGE SCALE GENOMIC DNA]</scope>
    <source>
        <strain>DSM 44549 / YS-314 / AJ 12310 / JCM 11189 / NBRC 100395</strain>
    </source>
</reference>